<comment type="miscellaneous">
    <text evidence="2">Almost completely overlaps SFL1.</text>
</comment>
<comment type="caution">
    <text evidence="3">Product of a dubious gene prediction unlikely to encode a functional protein. Because of that it is not part of the S.cerevisiae S288c complete/reference proteome set.</text>
</comment>
<dbReference type="EMBL" id="Z75047">
    <property type="protein sequence ID" value="CAA99339.1"/>
    <property type="molecule type" value="Genomic_DNA"/>
</dbReference>
<dbReference type="PIR" id="S67024">
    <property type="entry name" value="S67024"/>
</dbReference>
<dbReference type="PaxDb" id="4932-YOR139C"/>
<dbReference type="EnsemblFungi" id="YOR139C_mRNA">
    <property type="protein sequence ID" value="YOR139C"/>
    <property type="gene ID" value="YOR139C"/>
</dbReference>
<dbReference type="AGR" id="SGD:S000005665"/>
<dbReference type="SGD" id="S000005665">
    <property type="gene designation" value="YOR139C"/>
</dbReference>
<dbReference type="HOGENOM" id="CLU_1939739_0_0_1"/>
<accession>Q08532</accession>
<protein>
    <recommendedName>
        <fullName>Putative uncharacterized protein YOR139C</fullName>
    </recommendedName>
</protein>
<gene>
    <name type="ordered locus">YOR139C</name>
    <name type="ORF">O3335</name>
</gene>
<name>YO139_YEAST</name>
<reference key="1">
    <citation type="journal article" date="1997" name="Nature">
        <title>The nucleotide sequence of Saccharomyces cerevisiae chromosome XV.</title>
        <authorList>
            <person name="Dujon B."/>
            <person name="Albermann K."/>
            <person name="Aldea M."/>
            <person name="Alexandraki D."/>
            <person name="Ansorge W."/>
            <person name="Arino J."/>
            <person name="Benes V."/>
            <person name="Bohn C."/>
            <person name="Bolotin-Fukuhara M."/>
            <person name="Bordonne R."/>
            <person name="Boyer J."/>
            <person name="Camasses A."/>
            <person name="Casamayor A."/>
            <person name="Casas C."/>
            <person name="Cheret G."/>
            <person name="Cziepluch C."/>
            <person name="Daignan-Fornier B."/>
            <person name="Dang V.-D."/>
            <person name="de Haan M."/>
            <person name="Delius H."/>
            <person name="Durand P."/>
            <person name="Fairhead C."/>
            <person name="Feldmann H."/>
            <person name="Gaillon L."/>
            <person name="Galisson F."/>
            <person name="Gamo F.-J."/>
            <person name="Gancedo C."/>
            <person name="Goffeau A."/>
            <person name="Goulding S.E."/>
            <person name="Grivell L.A."/>
            <person name="Habbig B."/>
            <person name="Hand N.J."/>
            <person name="Hani J."/>
            <person name="Hattenhorst U."/>
            <person name="Hebling U."/>
            <person name="Hernando Y."/>
            <person name="Herrero E."/>
            <person name="Heumann K."/>
            <person name="Hiesel R."/>
            <person name="Hilger F."/>
            <person name="Hofmann B."/>
            <person name="Hollenberg C.P."/>
            <person name="Hughes B."/>
            <person name="Jauniaux J.-C."/>
            <person name="Kalogeropoulos A."/>
            <person name="Katsoulou C."/>
            <person name="Kordes E."/>
            <person name="Lafuente M.J."/>
            <person name="Landt O."/>
            <person name="Louis E.J."/>
            <person name="Maarse A.C."/>
            <person name="Madania A."/>
            <person name="Mannhaupt G."/>
            <person name="Marck C."/>
            <person name="Martin R.P."/>
            <person name="Mewes H.-W."/>
            <person name="Michaux G."/>
            <person name="Paces V."/>
            <person name="Parle-McDermott A.G."/>
            <person name="Pearson B.M."/>
            <person name="Perrin A."/>
            <person name="Pettersson B."/>
            <person name="Poch O."/>
            <person name="Pohl T.M."/>
            <person name="Poirey R."/>
            <person name="Portetelle D."/>
            <person name="Pujol A."/>
            <person name="Purnelle B."/>
            <person name="Ramezani Rad M."/>
            <person name="Rechmann S."/>
            <person name="Schwager C."/>
            <person name="Schweizer M."/>
            <person name="Sor F."/>
            <person name="Sterky F."/>
            <person name="Tarassov I.A."/>
            <person name="Teodoru C."/>
            <person name="Tettelin H."/>
            <person name="Thierry A."/>
            <person name="Tobiasch E."/>
            <person name="Tzermia M."/>
            <person name="Uhlen M."/>
            <person name="Unseld M."/>
            <person name="Valens M."/>
            <person name="Vandenbol M."/>
            <person name="Vetter I."/>
            <person name="Vlcek C."/>
            <person name="Voet M."/>
            <person name="Volckaert G."/>
            <person name="Voss H."/>
            <person name="Wambutt R."/>
            <person name="Wedler H."/>
            <person name="Wiemann S."/>
            <person name="Winsor B."/>
            <person name="Wolfe K.H."/>
            <person name="Zollner A."/>
            <person name="Zumstein E."/>
            <person name="Kleine K."/>
        </authorList>
    </citation>
    <scope>NUCLEOTIDE SEQUENCE [LARGE SCALE GENOMIC DNA]</scope>
    <source>
        <strain>ATCC 204508 / S288c</strain>
    </source>
</reference>
<reference key="2">
    <citation type="journal article" date="2014" name="G3 (Bethesda)">
        <title>The reference genome sequence of Saccharomyces cerevisiae: Then and now.</title>
        <authorList>
            <person name="Engel S.R."/>
            <person name="Dietrich F.S."/>
            <person name="Fisk D.G."/>
            <person name="Binkley G."/>
            <person name="Balakrishnan R."/>
            <person name="Costanzo M.C."/>
            <person name="Dwight S.S."/>
            <person name="Hitz B.C."/>
            <person name="Karra K."/>
            <person name="Nash R.S."/>
            <person name="Weng S."/>
            <person name="Wong E.D."/>
            <person name="Lloyd P."/>
            <person name="Skrzypek M.S."/>
            <person name="Miyasato S.R."/>
            <person name="Simison M."/>
            <person name="Cherry J.M."/>
        </authorList>
    </citation>
    <scope>GENOME REANNOTATION</scope>
    <source>
        <strain>ATCC 204508 / S288c</strain>
    </source>
</reference>
<proteinExistence type="uncertain"/>
<sequence length="130" mass="13598">MFNCLTKLVILVCLKYVAKALLNRSTGLIMKDKPEGVHHIKSCSDSSSRIWYSLWMNIAFCGGLGPTSIFDPCFLTSSAPSPPSAPALAIPAAAPPLPTSVPAGAGVEAGAGAETVSSSLMIFSSFFLYN</sequence>
<evidence type="ECO:0000255" key="1"/>
<evidence type="ECO:0000305" key="2"/>
<evidence type="ECO:0000305" key="3">
    <source>
    </source>
</evidence>
<feature type="signal peptide" evidence="1">
    <location>
        <begin position="1"/>
        <end position="20"/>
    </location>
</feature>
<feature type="chain" id="PRO_0000299716" description="Putative uncharacterized protein YOR139C">
    <location>
        <begin position="21"/>
        <end position="130"/>
    </location>
</feature>
<organism>
    <name type="scientific">Saccharomyces cerevisiae (strain ATCC 204508 / S288c)</name>
    <name type="common">Baker's yeast</name>
    <dbReference type="NCBI Taxonomy" id="559292"/>
    <lineage>
        <taxon>Eukaryota</taxon>
        <taxon>Fungi</taxon>
        <taxon>Dikarya</taxon>
        <taxon>Ascomycota</taxon>
        <taxon>Saccharomycotina</taxon>
        <taxon>Saccharomycetes</taxon>
        <taxon>Saccharomycetales</taxon>
        <taxon>Saccharomycetaceae</taxon>
        <taxon>Saccharomyces</taxon>
    </lineage>
</organism>
<keyword id="KW-0732">Signal</keyword>